<organism>
    <name type="scientific">Vibrio cholerae serotype O1 (strain ATCC 39541 / Classical Ogawa 395 / O395)</name>
    <dbReference type="NCBI Taxonomy" id="345073"/>
    <lineage>
        <taxon>Bacteria</taxon>
        <taxon>Pseudomonadati</taxon>
        <taxon>Pseudomonadota</taxon>
        <taxon>Gammaproteobacteria</taxon>
        <taxon>Vibrionales</taxon>
        <taxon>Vibrionaceae</taxon>
        <taxon>Vibrio</taxon>
    </lineage>
</organism>
<dbReference type="EC" id="6.3.1.5" evidence="1"/>
<dbReference type="EMBL" id="CP000626">
    <property type="protein sequence ID" value="ABQ18742.1"/>
    <property type="molecule type" value="Genomic_DNA"/>
</dbReference>
<dbReference type="EMBL" id="CP001236">
    <property type="protein sequence ID" value="ACP11086.1"/>
    <property type="molecule type" value="Genomic_DNA"/>
</dbReference>
<dbReference type="RefSeq" id="WP_000400328.1">
    <property type="nucleotide sequence ID" value="NZ_JAACZH010000027.1"/>
</dbReference>
<dbReference type="SMR" id="A5EYT7"/>
<dbReference type="KEGG" id="vco:VC0395_1021"/>
<dbReference type="KEGG" id="vcr:VC395_A0244"/>
<dbReference type="PATRIC" id="fig|345073.21.peg.3004"/>
<dbReference type="eggNOG" id="COG0171">
    <property type="taxonomic scope" value="Bacteria"/>
</dbReference>
<dbReference type="HOGENOM" id="CLU_059327_3_0_6"/>
<dbReference type="OrthoDB" id="3266517at2"/>
<dbReference type="UniPathway" id="UPA00253">
    <property type="reaction ID" value="UER00333"/>
</dbReference>
<dbReference type="Proteomes" id="UP000000249">
    <property type="component" value="Chromosome 1"/>
</dbReference>
<dbReference type="GO" id="GO:0005737">
    <property type="term" value="C:cytoplasm"/>
    <property type="evidence" value="ECO:0007669"/>
    <property type="project" value="InterPro"/>
</dbReference>
<dbReference type="GO" id="GO:0005524">
    <property type="term" value="F:ATP binding"/>
    <property type="evidence" value="ECO:0007669"/>
    <property type="project" value="UniProtKB-UniRule"/>
</dbReference>
<dbReference type="GO" id="GO:0004359">
    <property type="term" value="F:glutaminase activity"/>
    <property type="evidence" value="ECO:0007669"/>
    <property type="project" value="InterPro"/>
</dbReference>
<dbReference type="GO" id="GO:0046872">
    <property type="term" value="F:metal ion binding"/>
    <property type="evidence" value="ECO:0007669"/>
    <property type="project" value="UniProtKB-KW"/>
</dbReference>
<dbReference type="GO" id="GO:0003952">
    <property type="term" value="F:NAD+ synthase (glutamine-hydrolyzing) activity"/>
    <property type="evidence" value="ECO:0007669"/>
    <property type="project" value="InterPro"/>
</dbReference>
<dbReference type="GO" id="GO:0008795">
    <property type="term" value="F:NAD+ synthase activity"/>
    <property type="evidence" value="ECO:0007669"/>
    <property type="project" value="UniProtKB-UniRule"/>
</dbReference>
<dbReference type="GO" id="GO:0009435">
    <property type="term" value="P:NAD biosynthetic process"/>
    <property type="evidence" value="ECO:0007669"/>
    <property type="project" value="UniProtKB-UniRule"/>
</dbReference>
<dbReference type="CDD" id="cd00553">
    <property type="entry name" value="NAD_synthase"/>
    <property type="match status" value="1"/>
</dbReference>
<dbReference type="FunFam" id="3.40.50.620:FF:000015">
    <property type="entry name" value="NH(3)-dependent NAD(+) synthetase"/>
    <property type="match status" value="1"/>
</dbReference>
<dbReference type="Gene3D" id="3.40.50.620">
    <property type="entry name" value="HUPs"/>
    <property type="match status" value="1"/>
</dbReference>
<dbReference type="HAMAP" id="MF_00193">
    <property type="entry name" value="NadE_ammonia_dep"/>
    <property type="match status" value="1"/>
</dbReference>
<dbReference type="InterPro" id="IPR022310">
    <property type="entry name" value="NAD/GMP_synthase"/>
</dbReference>
<dbReference type="InterPro" id="IPR003694">
    <property type="entry name" value="NAD_synthase"/>
</dbReference>
<dbReference type="InterPro" id="IPR022926">
    <property type="entry name" value="NH(3)-dep_NAD(+)_synth"/>
</dbReference>
<dbReference type="InterPro" id="IPR014729">
    <property type="entry name" value="Rossmann-like_a/b/a_fold"/>
</dbReference>
<dbReference type="NCBIfam" id="TIGR00552">
    <property type="entry name" value="nadE"/>
    <property type="match status" value="1"/>
</dbReference>
<dbReference type="NCBIfam" id="NF001979">
    <property type="entry name" value="PRK00768.1"/>
    <property type="match status" value="1"/>
</dbReference>
<dbReference type="PANTHER" id="PTHR23090">
    <property type="entry name" value="NH 3 /GLUTAMINE-DEPENDENT NAD + SYNTHETASE"/>
    <property type="match status" value="1"/>
</dbReference>
<dbReference type="PANTHER" id="PTHR23090:SF7">
    <property type="entry name" value="NH(3)-DEPENDENT NAD(+) SYNTHETASE"/>
    <property type="match status" value="1"/>
</dbReference>
<dbReference type="Pfam" id="PF02540">
    <property type="entry name" value="NAD_synthase"/>
    <property type="match status" value="1"/>
</dbReference>
<dbReference type="SUPFAM" id="SSF52402">
    <property type="entry name" value="Adenine nucleotide alpha hydrolases-like"/>
    <property type="match status" value="1"/>
</dbReference>
<feature type="chain" id="PRO_1000077635" description="NH(3)-dependent NAD(+) synthetase">
    <location>
        <begin position="1"/>
        <end position="276"/>
    </location>
</feature>
<feature type="binding site" evidence="1">
    <location>
        <begin position="43"/>
        <end position="50"/>
    </location>
    <ligand>
        <name>ATP</name>
        <dbReference type="ChEBI" id="CHEBI:30616"/>
    </ligand>
</feature>
<feature type="binding site" evidence="1">
    <location>
        <position position="49"/>
    </location>
    <ligand>
        <name>Mg(2+)</name>
        <dbReference type="ChEBI" id="CHEBI:18420"/>
    </ligand>
</feature>
<feature type="binding site" evidence="1">
    <location>
        <position position="146"/>
    </location>
    <ligand>
        <name>deamido-NAD(+)</name>
        <dbReference type="ChEBI" id="CHEBI:58437"/>
    </ligand>
</feature>
<feature type="binding site" evidence="1">
    <location>
        <position position="166"/>
    </location>
    <ligand>
        <name>ATP</name>
        <dbReference type="ChEBI" id="CHEBI:30616"/>
    </ligand>
</feature>
<feature type="binding site" evidence="1">
    <location>
        <position position="171"/>
    </location>
    <ligand>
        <name>Mg(2+)</name>
        <dbReference type="ChEBI" id="CHEBI:18420"/>
    </ligand>
</feature>
<feature type="binding site" evidence="1">
    <location>
        <position position="179"/>
    </location>
    <ligand>
        <name>deamido-NAD(+)</name>
        <dbReference type="ChEBI" id="CHEBI:58437"/>
    </ligand>
</feature>
<feature type="binding site" evidence="1">
    <location>
        <position position="186"/>
    </location>
    <ligand>
        <name>deamido-NAD(+)</name>
        <dbReference type="ChEBI" id="CHEBI:58437"/>
    </ligand>
</feature>
<feature type="binding site" evidence="1">
    <location>
        <position position="195"/>
    </location>
    <ligand>
        <name>ATP</name>
        <dbReference type="ChEBI" id="CHEBI:30616"/>
    </ligand>
</feature>
<feature type="binding site" evidence="1">
    <location>
        <position position="217"/>
    </location>
    <ligand>
        <name>ATP</name>
        <dbReference type="ChEBI" id="CHEBI:30616"/>
    </ligand>
</feature>
<feature type="binding site" evidence="1">
    <location>
        <begin position="266"/>
        <end position="267"/>
    </location>
    <ligand>
        <name>deamido-NAD(+)</name>
        <dbReference type="ChEBI" id="CHEBI:58437"/>
    </ligand>
</feature>
<sequence>MEHKIREEMRVLPSIDPQFEIERRVAFIKRKLTEARCKSLVLGISGGVDSTTCGRLAQLAVEELNQQHNTTEYQFIAVRLPYGEQKDEDEAQLALSFIRPTHSVSVNIKAGVDGLHAASHHALANTGLIPSDPAKVDFIKGNVKARARMVAQYEIAGYVGGLVLGTDHSAENITGFYTKFGDGACDLAPLFGLNKRQVRLLAKTLGAPEQLVYKTPTADLEELAPQKADEAALNLTYEQIDDFLEGKAVPAEVSQRLVAIYHATQHKRQPIPTIYD</sequence>
<accession>A5EYT7</accession>
<accession>C3M7U0</accession>
<gene>
    <name evidence="1" type="primary">nadE</name>
    <name type="ordered locus">VC0395_1021</name>
    <name type="ordered locus">VC395_A0244</name>
</gene>
<keyword id="KW-0067">ATP-binding</keyword>
<keyword id="KW-0436">Ligase</keyword>
<keyword id="KW-0460">Magnesium</keyword>
<keyword id="KW-0479">Metal-binding</keyword>
<keyword id="KW-0520">NAD</keyword>
<keyword id="KW-0547">Nucleotide-binding</keyword>
<name>NADE_VIBC3</name>
<reference key="1">
    <citation type="submission" date="2007-03" db="EMBL/GenBank/DDBJ databases">
        <authorList>
            <person name="Heidelberg J."/>
        </authorList>
    </citation>
    <scope>NUCLEOTIDE SEQUENCE [LARGE SCALE GENOMIC DNA]</scope>
    <source>
        <strain>ATCC 39541 / Classical Ogawa 395 / O395</strain>
    </source>
</reference>
<reference key="2">
    <citation type="journal article" date="2008" name="PLoS ONE">
        <title>A recalibrated molecular clock and independent origins for the cholera pandemic clones.</title>
        <authorList>
            <person name="Feng L."/>
            <person name="Reeves P.R."/>
            <person name="Lan R."/>
            <person name="Ren Y."/>
            <person name="Gao C."/>
            <person name="Zhou Z."/>
            <person name="Ren Y."/>
            <person name="Cheng J."/>
            <person name="Wang W."/>
            <person name="Wang J."/>
            <person name="Qian W."/>
            <person name="Li D."/>
            <person name="Wang L."/>
        </authorList>
    </citation>
    <scope>NUCLEOTIDE SEQUENCE [LARGE SCALE GENOMIC DNA]</scope>
    <source>
        <strain>ATCC 39541 / Classical Ogawa 395 / O395</strain>
    </source>
</reference>
<evidence type="ECO:0000255" key="1">
    <source>
        <dbReference type="HAMAP-Rule" id="MF_00193"/>
    </source>
</evidence>
<comment type="function">
    <text evidence="1">Catalyzes the ATP-dependent amidation of deamido-NAD to form NAD. Uses ammonia as a nitrogen source.</text>
</comment>
<comment type="catalytic activity">
    <reaction evidence="1">
        <text>deamido-NAD(+) + NH4(+) + ATP = AMP + diphosphate + NAD(+) + H(+)</text>
        <dbReference type="Rhea" id="RHEA:21188"/>
        <dbReference type="ChEBI" id="CHEBI:15378"/>
        <dbReference type="ChEBI" id="CHEBI:28938"/>
        <dbReference type="ChEBI" id="CHEBI:30616"/>
        <dbReference type="ChEBI" id="CHEBI:33019"/>
        <dbReference type="ChEBI" id="CHEBI:57540"/>
        <dbReference type="ChEBI" id="CHEBI:58437"/>
        <dbReference type="ChEBI" id="CHEBI:456215"/>
        <dbReference type="EC" id="6.3.1.5"/>
    </reaction>
</comment>
<comment type="pathway">
    <text evidence="1">Cofactor biosynthesis; NAD(+) biosynthesis; NAD(+) from deamido-NAD(+) (ammonia route): step 1/1.</text>
</comment>
<comment type="subunit">
    <text evidence="1">Homodimer.</text>
</comment>
<comment type="similarity">
    <text evidence="1">Belongs to the NAD synthetase family.</text>
</comment>
<protein>
    <recommendedName>
        <fullName evidence="1">NH(3)-dependent NAD(+) synthetase</fullName>
        <ecNumber evidence="1">6.3.1.5</ecNumber>
    </recommendedName>
</protein>
<proteinExistence type="inferred from homology"/>